<keyword id="KW-0378">Hydrolase</keyword>
<keyword id="KW-0479">Metal-binding</keyword>
<keyword id="KW-0546">Nucleotide metabolism</keyword>
<keyword id="KW-0862">Zinc</keyword>
<reference key="1">
    <citation type="journal article" date="2008" name="J. Bacteriol.">
        <title>The pangenome structure of Escherichia coli: comparative genomic analysis of E. coli commensal and pathogenic isolates.</title>
        <authorList>
            <person name="Rasko D.A."/>
            <person name="Rosovitz M.J."/>
            <person name="Myers G.S.A."/>
            <person name="Mongodin E.F."/>
            <person name="Fricke W.F."/>
            <person name="Gajer P."/>
            <person name="Crabtree J."/>
            <person name="Sebaihia M."/>
            <person name="Thomson N.R."/>
            <person name="Chaudhuri R."/>
            <person name="Henderson I.R."/>
            <person name="Sperandio V."/>
            <person name="Ravel J."/>
        </authorList>
    </citation>
    <scope>NUCLEOTIDE SEQUENCE [LARGE SCALE GENOMIC DNA]</scope>
    <source>
        <strain>HS</strain>
    </source>
</reference>
<accession>A8A0G5</accession>
<proteinExistence type="inferred from homology"/>
<organism>
    <name type="scientific">Escherichia coli O9:H4 (strain HS)</name>
    <dbReference type="NCBI Taxonomy" id="331112"/>
    <lineage>
        <taxon>Bacteria</taxon>
        <taxon>Pseudomonadati</taxon>
        <taxon>Pseudomonadota</taxon>
        <taxon>Gammaproteobacteria</taxon>
        <taxon>Enterobacterales</taxon>
        <taxon>Enterobacteriaceae</taxon>
        <taxon>Escherichia</taxon>
    </lineage>
</organism>
<feature type="chain" id="PRO_1000061055" description="Adenosine deaminase">
    <location>
        <begin position="1"/>
        <end position="333"/>
    </location>
</feature>
<feature type="active site" description="Proton donor" evidence="1">
    <location>
        <position position="200"/>
    </location>
</feature>
<feature type="binding site" evidence="1">
    <location>
        <position position="12"/>
    </location>
    <ligand>
        <name>Zn(2+)</name>
        <dbReference type="ChEBI" id="CHEBI:29105"/>
        <note>catalytic</note>
    </ligand>
</feature>
<feature type="binding site" evidence="1">
    <location>
        <position position="14"/>
    </location>
    <ligand>
        <name>substrate</name>
    </ligand>
</feature>
<feature type="binding site" evidence="1">
    <location>
        <position position="14"/>
    </location>
    <ligand>
        <name>Zn(2+)</name>
        <dbReference type="ChEBI" id="CHEBI:29105"/>
        <note>catalytic</note>
    </ligand>
</feature>
<feature type="binding site" evidence="1">
    <location>
        <position position="16"/>
    </location>
    <ligand>
        <name>substrate</name>
    </ligand>
</feature>
<feature type="binding site" evidence="1">
    <location>
        <position position="170"/>
    </location>
    <ligand>
        <name>substrate</name>
    </ligand>
</feature>
<feature type="binding site" evidence="1">
    <location>
        <position position="197"/>
    </location>
    <ligand>
        <name>Zn(2+)</name>
        <dbReference type="ChEBI" id="CHEBI:29105"/>
        <note>catalytic</note>
    </ligand>
</feature>
<feature type="binding site" evidence="1">
    <location>
        <position position="278"/>
    </location>
    <ligand>
        <name>Zn(2+)</name>
        <dbReference type="ChEBI" id="CHEBI:29105"/>
        <note>catalytic</note>
    </ligand>
</feature>
<feature type="binding site" evidence="1">
    <location>
        <position position="279"/>
    </location>
    <ligand>
        <name>substrate</name>
    </ligand>
</feature>
<feature type="site" description="Important for catalytic activity" evidence="1">
    <location>
        <position position="221"/>
    </location>
</feature>
<evidence type="ECO:0000255" key="1">
    <source>
        <dbReference type="HAMAP-Rule" id="MF_00540"/>
    </source>
</evidence>
<sequence>MIDTTLPLTDIHRHLDGNIRPQTILELGRQYNISLPAQSLETLIPHVQVIANEPDLVSFLTKLDWGVKVLASLDACRRVAFENIEDAARHGLHYVELRFSPGYMAMAHQLPVAGVVEAVIDGVREGCRTFGVQAKLIGIMSRTFGEAACQQELEAFLAHRDQITALDLAGDELGFPGSLFLSHFNRARDAGWHITVHAGEAAGPESIWQAIRELGAERIGHGVKAIEDRALMDFLAEQQIGIESCLTSNIQTSTVAELAAHPLKTFLEHGIRASINTDDPGVQGVDIIHEYTVAAPAAGLSREQIRQAQINGLEMAFLSAEEKRALREKVAAK</sequence>
<dbReference type="EC" id="3.5.4.4" evidence="1"/>
<dbReference type="EMBL" id="CP000802">
    <property type="protein sequence ID" value="ABV06019.1"/>
    <property type="molecule type" value="Genomic_DNA"/>
</dbReference>
<dbReference type="RefSeq" id="WP_000567490.1">
    <property type="nucleotide sequence ID" value="NC_009800.1"/>
</dbReference>
<dbReference type="SMR" id="A8A0G5"/>
<dbReference type="GeneID" id="75204467"/>
<dbReference type="KEGG" id="ecx:EcHS_A1698"/>
<dbReference type="HOGENOM" id="CLU_039228_0_2_6"/>
<dbReference type="GO" id="GO:0005829">
    <property type="term" value="C:cytosol"/>
    <property type="evidence" value="ECO:0007669"/>
    <property type="project" value="TreeGrafter"/>
</dbReference>
<dbReference type="GO" id="GO:0046936">
    <property type="term" value="F:2'-deoxyadenosine deaminase activity"/>
    <property type="evidence" value="ECO:0007669"/>
    <property type="project" value="RHEA"/>
</dbReference>
<dbReference type="GO" id="GO:0004000">
    <property type="term" value="F:adenosine deaminase activity"/>
    <property type="evidence" value="ECO:0007669"/>
    <property type="project" value="UniProtKB-UniRule"/>
</dbReference>
<dbReference type="GO" id="GO:0008270">
    <property type="term" value="F:zinc ion binding"/>
    <property type="evidence" value="ECO:0007669"/>
    <property type="project" value="UniProtKB-UniRule"/>
</dbReference>
<dbReference type="GO" id="GO:0006154">
    <property type="term" value="P:adenosine catabolic process"/>
    <property type="evidence" value="ECO:0007669"/>
    <property type="project" value="TreeGrafter"/>
</dbReference>
<dbReference type="GO" id="GO:0043103">
    <property type="term" value="P:hypoxanthine salvage"/>
    <property type="evidence" value="ECO:0007669"/>
    <property type="project" value="TreeGrafter"/>
</dbReference>
<dbReference type="GO" id="GO:0046103">
    <property type="term" value="P:inosine biosynthetic process"/>
    <property type="evidence" value="ECO:0007669"/>
    <property type="project" value="TreeGrafter"/>
</dbReference>
<dbReference type="GO" id="GO:0009117">
    <property type="term" value="P:nucleotide metabolic process"/>
    <property type="evidence" value="ECO:0007669"/>
    <property type="project" value="UniProtKB-KW"/>
</dbReference>
<dbReference type="GO" id="GO:0009168">
    <property type="term" value="P:purine ribonucleoside monophosphate biosynthetic process"/>
    <property type="evidence" value="ECO:0007669"/>
    <property type="project" value="UniProtKB-UniRule"/>
</dbReference>
<dbReference type="CDD" id="cd01320">
    <property type="entry name" value="ADA"/>
    <property type="match status" value="1"/>
</dbReference>
<dbReference type="FunFam" id="3.20.20.140:FF:000009">
    <property type="entry name" value="Adenosine deaminase"/>
    <property type="match status" value="1"/>
</dbReference>
<dbReference type="Gene3D" id="3.20.20.140">
    <property type="entry name" value="Metal-dependent hydrolases"/>
    <property type="match status" value="1"/>
</dbReference>
<dbReference type="HAMAP" id="MF_00540">
    <property type="entry name" value="A_deaminase"/>
    <property type="match status" value="1"/>
</dbReference>
<dbReference type="InterPro" id="IPR006650">
    <property type="entry name" value="A/AMP_deam_AS"/>
</dbReference>
<dbReference type="InterPro" id="IPR028893">
    <property type="entry name" value="A_deaminase"/>
</dbReference>
<dbReference type="InterPro" id="IPR001365">
    <property type="entry name" value="A_deaminase_dom"/>
</dbReference>
<dbReference type="InterPro" id="IPR006330">
    <property type="entry name" value="Ado/ade_deaminase"/>
</dbReference>
<dbReference type="InterPro" id="IPR032466">
    <property type="entry name" value="Metal_Hydrolase"/>
</dbReference>
<dbReference type="NCBIfam" id="TIGR01430">
    <property type="entry name" value="aden_deam"/>
    <property type="match status" value="1"/>
</dbReference>
<dbReference type="NCBIfam" id="NF006846">
    <property type="entry name" value="PRK09358.1-1"/>
    <property type="match status" value="1"/>
</dbReference>
<dbReference type="PANTHER" id="PTHR11409">
    <property type="entry name" value="ADENOSINE DEAMINASE"/>
    <property type="match status" value="1"/>
</dbReference>
<dbReference type="PANTHER" id="PTHR11409:SF43">
    <property type="entry name" value="ADENOSINE DEAMINASE"/>
    <property type="match status" value="1"/>
</dbReference>
<dbReference type="Pfam" id="PF00962">
    <property type="entry name" value="A_deaminase"/>
    <property type="match status" value="1"/>
</dbReference>
<dbReference type="SUPFAM" id="SSF51556">
    <property type="entry name" value="Metallo-dependent hydrolases"/>
    <property type="match status" value="1"/>
</dbReference>
<dbReference type="PROSITE" id="PS00485">
    <property type="entry name" value="A_DEAMINASE"/>
    <property type="match status" value="1"/>
</dbReference>
<protein>
    <recommendedName>
        <fullName evidence="1">Adenosine deaminase</fullName>
        <ecNumber evidence="1">3.5.4.4</ecNumber>
    </recommendedName>
    <alternativeName>
        <fullName evidence="1">Adenosine aminohydrolase</fullName>
    </alternativeName>
</protein>
<gene>
    <name evidence="1" type="primary">add</name>
    <name type="ordered locus">EcHS_A1698</name>
</gene>
<name>ADD_ECOHS</name>
<comment type="function">
    <text evidence="1">Catalyzes the hydrolytic deamination of adenosine and 2-deoxyadenosine.</text>
</comment>
<comment type="catalytic activity">
    <reaction evidence="1">
        <text>adenosine + H2O + H(+) = inosine + NH4(+)</text>
        <dbReference type="Rhea" id="RHEA:24408"/>
        <dbReference type="ChEBI" id="CHEBI:15377"/>
        <dbReference type="ChEBI" id="CHEBI:15378"/>
        <dbReference type="ChEBI" id="CHEBI:16335"/>
        <dbReference type="ChEBI" id="CHEBI:17596"/>
        <dbReference type="ChEBI" id="CHEBI:28938"/>
        <dbReference type="EC" id="3.5.4.4"/>
    </reaction>
    <physiologicalReaction direction="left-to-right" evidence="1">
        <dbReference type="Rhea" id="RHEA:24409"/>
    </physiologicalReaction>
</comment>
<comment type="catalytic activity">
    <reaction evidence="1">
        <text>2'-deoxyadenosine + H2O + H(+) = 2'-deoxyinosine + NH4(+)</text>
        <dbReference type="Rhea" id="RHEA:28190"/>
        <dbReference type="ChEBI" id="CHEBI:15377"/>
        <dbReference type="ChEBI" id="CHEBI:15378"/>
        <dbReference type="ChEBI" id="CHEBI:17256"/>
        <dbReference type="ChEBI" id="CHEBI:28938"/>
        <dbReference type="ChEBI" id="CHEBI:28997"/>
        <dbReference type="EC" id="3.5.4.4"/>
    </reaction>
    <physiologicalReaction direction="left-to-right" evidence="1">
        <dbReference type="Rhea" id="RHEA:28191"/>
    </physiologicalReaction>
</comment>
<comment type="cofactor">
    <cofactor evidence="1">
        <name>Zn(2+)</name>
        <dbReference type="ChEBI" id="CHEBI:29105"/>
    </cofactor>
    <text evidence="1">Binds 1 zinc ion per subunit.</text>
</comment>
<comment type="similarity">
    <text evidence="1">Belongs to the metallo-dependent hydrolases superfamily. Adenosine and AMP deaminases family. Adenosine deaminase subfamily.</text>
</comment>